<comment type="function">
    <text evidence="1">Transcription factor that plays a role in the activation of archaeal genes transcribed by RNA polymerase. Facilitates transcription initiation by enhancing TATA-box recognition by TATA-box-binding protein (Tbp), and transcription factor B (Tfb) and RNA polymerase recruitment. Not absolutely required for transcription in vitro, but particularly important in cases where Tbp or Tfb function is not optimal. It dynamically alters the nucleic acid-binding properties of RNA polymerases by stabilizing the initiation complex and destabilizing elongation complexes. Seems to translocate with the RNA polymerase following initiation and acts by binding to the non template strand of the transcription bubble in elongation complexes.</text>
</comment>
<comment type="subunit">
    <text evidence="1">Monomer. Interaction with RNA polymerase subunits RpoF and RpoE is necessary for Tfe stimulatory transcription activity. Able to interact with Tbp and RNA polymerase in the absence of DNA promoter. Interacts both with the preinitiation and elongation complexes.</text>
</comment>
<comment type="domain">
    <text evidence="1">The winged helix domain is involved in binding to DNA in the preinitiation complex.</text>
</comment>
<comment type="similarity">
    <text evidence="1">Belongs to the TFE family.</text>
</comment>
<gene>
    <name evidence="1" type="primary">tfe</name>
    <name type="ordered locus">AF_0757</name>
</gene>
<reference key="1">
    <citation type="journal article" date="1997" name="Nature">
        <title>The complete genome sequence of the hyperthermophilic, sulphate-reducing archaeon Archaeoglobus fulgidus.</title>
        <authorList>
            <person name="Klenk H.-P."/>
            <person name="Clayton R.A."/>
            <person name="Tomb J.-F."/>
            <person name="White O."/>
            <person name="Nelson K.E."/>
            <person name="Ketchum K.A."/>
            <person name="Dodson R.J."/>
            <person name="Gwinn M.L."/>
            <person name="Hickey E.K."/>
            <person name="Peterson J.D."/>
            <person name="Richardson D.L."/>
            <person name="Kerlavage A.R."/>
            <person name="Graham D.E."/>
            <person name="Kyrpides N.C."/>
            <person name="Fleischmann R.D."/>
            <person name="Quackenbush J."/>
            <person name="Lee N.H."/>
            <person name="Sutton G.G."/>
            <person name="Gill S.R."/>
            <person name="Kirkness E.F."/>
            <person name="Dougherty B.A."/>
            <person name="McKenney K."/>
            <person name="Adams M.D."/>
            <person name="Loftus B.J."/>
            <person name="Peterson S.N."/>
            <person name="Reich C.I."/>
            <person name="McNeil L.K."/>
            <person name="Badger J.H."/>
            <person name="Glodek A."/>
            <person name="Zhou L."/>
            <person name="Overbeek R."/>
            <person name="Gocayne J.D."/>
            <person name="Weidman J.F."/>
            <person name="McDonald L.A."/>
            <person name="Utterback T.R."/>
            <person name="Cotton M.D."/>
            <person name="Spriggs T."/>
            <person name="Artiach P."/>
            <person name="Kaine B.P."/>
            <person name="Sykes S.M."/>
            <person name="Sadow P.W."/>
            <person name="D'Andrea K.P."/>
            <person name="Bowman C."/>
            <person name="Fujii C."/>
            <person name="Garland S.A."/>
            <person name="Mason T.M."/>
            <person name="Olsen G.J."/>
            <person name="Fraser C.M."/>
            <person name="Smith H.O."/>
            <person name="Woese C.R."/>
            <person name="Venter J.C."/>
        </authorList>
    </citation>
    <scope>NUCLEOTIDE SEQUENCE [LARGE SCALE GENOMIC DNA]</scope>
    <source>
        <strain>ATCC 49558 / DSM 4304 / JCM 9628 / NBRC 100126 / VC-16</strain>
    </source>
</reference>
<feature type="chain" id="PRO_0000326588" description="Transcription factor E">
    <location>
        <begin position="1"/>
        <end position="177"/>
    </location>
</feature>
<feature type="domain" description="HTH TFE/IIEalpha-type" evidence="1">
    <location>
        <begin position="9"/>
        <end position="91"/>
    </location>
</feature>
<protein>
    <recommendedName>
        <fullName evidence="1">Transcription factor E</fullName>
        <shortName evidence="1">TFE</shortName>
    </recommendedName>
    <alternativeName>
        <fullName evidence="1">TFIIE subunit alpha homolog</fullName>
    </alternativeName>
    <alternativeName>
        <fullName evidence="1">Transcription initiation factor TFIIE</fullName>
    </alternativeName>
</protein>
<sequence>MKAETTTGVEELLNELVGRAAGEVGLILFSLGIEGEFTDDQLSLELGIEINEIRKALFALYEIGLADYVRRRDDETGWMEYYWRINYDKALDVLKRELEKTAKKLREKIEAETSTIYYICPNMCVKVSYNDAMELNFTCPRCGAMLDYLDCSKAIEKIEEEVRRIEEILESLDKNSG</sequence>
<name>TFE_ARCFU</name>
<organism>
    <name type="scientific">Archaeoglobus fulgidus (strain ATCC 49558 / DSM 4304 / JCM 9628 / NBRC 100126 / VC-16)</name>
    <dbReference type="NCBI Taxonomy" id="224325"/>
    <lineage>
        <taxon>Archaea</taxon>
        <taxon>Methanobacteriati</taxon>
        <taxon>Methanobacteriota</taxon>
        <taxon>Archaeoglobi</taxon>
        <taxon>Archaeoglobales</taxon>
        <taxon>Archaeoglobaceae</taxon>
        <taxon>Archaeoglobus</taxon>
    </lineage>
</organism>
<dbReference type="EMBL" id="AE000782">
    <property type="protein sequence ID" value="AAB90479.1"/>
    <property type="molecule type" value="Genomic_DNA"/>
</dbReference>
<dbReference type="PIR" id="E69344">
    <property type="entry name" value="E69344"/>
</dbReference>
<dbReference type="RefSeq" id="WP_010878260.1">
    <property type="nucleotide sequence ID" value="NC_000917.1"/>
</dbReference>
<dbReference type="SMR" id="O29501"/>
<dbReference type="STRING" id="224325.AF_0757"/>
<dbReference type="PaxDb" id="224325-AF_0757"/>
<dbReference type="EnsemblBacteria" id="AAB90479">
    <property type="protein sequence ID" value="AAB90479"/>
    <property type="gene ID" value="AF_0757"/>
</dbReference>
<dbReference type="GeneID" id="24794355"/>
<dbReference type="KEGG" id="afu:AF_0757"/>
<dbReference type="eggNOG" id="arCOG04270">
    <property type="taxonomic scope" value="Archaea"/>
</dbReference>
<dbReference type="HOGENOM" id="CLU_100097_0_0_2"/>
<dbReference type="OrthoDB" id="5935at2157"/>
<dbReference type="PhylomeDB" id="O29501"/>
<dbReference type="Proteomes" id="UP000002199">
    <property type="component" value="Chromosome"/>
</dbReference>
<dbReference type="GO" id="GO:0003677">
    <property type="term" value="F:DNA binding"/>
    <property type="evidence" value="ECO:0007669"/>
    <property type="project" value="UniProtKB-KW"/>
</dbReference>
<dbReference type="GO" id="GO:0006355">
    <property type="term" value="P:regulation of DNA-templated transcription"/>
    <property type="evidence" value="ECO:0007669"/>
    <property type="project" value="InterPro"/>
</dbReference>
<dbReference type="GO" id="GO:0006367">
    <property type="term" value="P:transcription initiation at RNA polymerase II promoter"/>
    <property type="evidence" value="ECO:0007669"/>
    <property type="project" value="InterPro"/>
</dbReference>
<dbReference type="Gene3D" id="1.10.10.10">
    <property type="entry name" value="Winged helix-like DNA-binding domain superfamily/Winged helix DNA-binding domain"/>
    <property type="match status" value="1"/>
</dbReference>
<dbReference type="HAMAP" id="MF_01909">
    <property type="entry name" value="TFE_arch"/>
    <property type="match status" value="1"/>
</dbReference>
<dbReference type="InterPro" id="IPR016481">
    <property type="entry name" value="TF_E_archaea"/>
</dbReference>
<dbReference type="InterPro" id="IPR039997">
    <property type="entry name" value="TFE"/>
</dbReference>
<dbReference type="InterPro" id="IPR017919">
    <property type="entry name" value="TFIIE/TFIIEa_HTH"/>
</dbReference>
<dbReference type="InterPro" id="IPR002853">
    <property type="entry name" value="TFIIE_asu"/>
</dbReference>
<dbReference type="InterPro" id="IPR024550">
    <property type="entry name" value="TFIIEa/SarR/Rpc3_HTH_dom"/>
</dbReference>
<dbReference type="InterPro" id="IPR036388">
    <property type="entry name" value="WH-like_DNA-bd_sf"/>
</dbReference>
<dbReference type="InterPro" id="IPR036390">
    <property type="entry name" value="WH_DNA-bd_sf"/>
</dbReference>
<dbReference type="InterPro" id="IPR013137">
    <property type="entry name" value="Znf_TFIIB"/>
</dbReference>
<dbReference type="NCBIfam" id="TIGR00373">
    <property type="entry name" value="transcription factor E"/>
    <property type="match status" value="1"/>
</dbReference>
<dbReference type="PANTHER" id="PTHR13097:SF7">
    <property type="entry name" value="GENERAL TRANSCRIPTION FACTOR IIE SUBUNIT 1"/>
    <property type="match status" value="1"/>
</dbReference>
<dbReference type="PANTHER" id="PTHR13097">
    <property type="entry name" value="TRANSCRIPTION INITIATION FACTOR IIE, ALPHA SUBUNIT"/>
    <property type="match status" value="1"/>
</dbReference>
<dbReference type="Pfam" id="PF02002">
    <property type="entry name" value="TFIIE_alpha"/>
    <property type="match status" value="1"/>
</dbReference>
<dbReference type="Pfam" id="PF08271">
    <property type="entry name" value="Zn_Ribbon_TF"/>
    <property type="match status" value="1"/>
</dbReference>
<dbReference type="PIRSF" id="PIRSF006373">
    <property type="entry name" value="TF_E_archaea"/>
    <property type="match status" value="1"/>
</dbReference>
<dbReference type="SMART" id="SM00531">
    <property type="entry name" value="TFIIE"/>
    <property type="match status" value="1"/>
</dbReference>
<dbReference type="SUPFAM" id="SSF46785">
    <property type="entry name" value="Winged helix' DNA-binding domain"/>
    <property type="match status" value="1"/>
</dbReference>
<dbReference type="PROSITE" id="PS51344">
    <property type="entry name" value="HTH_TFE_IIE"/>
    <property type="match status" value="1"/>
</dbReference>
<evidence type="ECO:0000255" key="1">
    <source>
        <dbReference type="HAMAP-Rule" id="MF_01909"/>
    </source>
</evidence>
<accession>O29501</accession>
<proteinExistence type="inferred from homology"/>
<keyword id="KW-0238">DNA-binding</keyword>
<keyword id="KW-1185">Reference proteome</keyword>
<keyword id="KW-0804">Transcription</keyword>
<keyword id="KW-0805">Transcription regulation</keyword>